<proteinExistence type="inferred from homology"/>
<name>OBG_MAGMM</name>
<accession>A0LCZ3</accession>
<keyword id="KW-0963">Cytoplasm</keyword>
<keyword id="KW-0342">GTP-binding</keyword>
<keyword id="KW-0378">Hydrolase</keyword>
<keyword id="KW-0460">Magnesium</keyword>
<keyword id="KW-0479">Metal-binding</keyword>
<keyword id="KW-0547">Nucleotide-binding</keyword>
<keyword id="KW-1185">Reference proteome</keyword>
<gene>
    <name evidence="1" type="primary">obg</name>
    <name type="ordered locus">Mmc1_3350</name>
</gene>
<reference key="1">
    <citation type="journal article" date="2009" name="Appl. Environ. Microbiol.">
        <title>Complete genome sequence of the chemolithoautotrophic marine magnetotactic coccus strain MC-1.</title>
        <authorList>
            <person name="Schubbe S."/>
            <person name="Williams T.J."/>
            <person name="Xie G."/>
            <person name="Kiss H.E."/>
            <person name="Brettin T.S."/>
            <person name="Martinez D."/>
            <person name="Ross C.A."/>
            <person name="Schuler D."/>
            <person name="Cox B.L."/>
            <person name="Nealson K.H."/>
            <person name="Bazylinski D.A."/>
        </authorList>
    </citation>
    <scope>NUCLEOTIDE SEQUENCE [LARGE SCALE GENOMIC DNA]</scope>
    <source>
        <strain>ATCC BAA-1437 / JCM 17883 / MC-1</strain>
    </source>
</reference>
<evidence type="ECO:0000255" key="1">
    <source>
        <dbReference type="HAMAP-Rule" id="MF_01454"/>
    </source>
</evidence>
<evidence type="ECO:0000255" key="2">
    <source>
        <dbReference type="PROSITE-ProRule" id="PRU01231"/>
    </source>
</evidence>
<evidence type="ECO:0000256" key="3">
    <source>
        <dbReference type="SAM" id="MobiDB-lite"/>
    </source>
</evidence>
<dbReference type="EC" id="3.6.5.-" evidence="1"/>
<dbReference type="EMBL" id="CP000471">
    <property type="protein sequence ID" value="ABK45836.1"/>
    <property type="molecule type" value="Genomic_DNA"/>
</dbReference>
<dbReference type="RefSeq" id="WP_011714895.1">
    <property type="nucleotide sequence ID" value="NC_008576.1"/>
</dbReference>
<dbReference type="SMR" id="A0LCZ3"/>
<dbReference type="STRING" id="156889.Mmc1_3350"/>
<dbReference type="KEGG" id="mgm:Mmc1_3350"/>
<dbReference type="eggNOG" id="COG0536">
    <property type="taxonomic scope" value="Bacteria"/>
</dbReference>
<dbReference type="HOGENOM" id="CLU_011747_2_0_5"/>
<dbReference type="OrthoDB" id="9807318at2"/>
<dbReference type="Proteomes" id="UP000002586">
    <property type="component" value="Chromosome"/>
</dbReference>
<dbReference type="GO" id="GO:0005737">
    <property type="term" value="C:cytoplasm"/>
    <property type="evidence" value="ECO:0007669"/>
    <property type="project" value="UniProtKB-SubCell"/>
</dbReference>
<dbReference type="GO" id="GO:0005525">
    <property type="term" value="F:GTP binding"/>
    <property type="evidence" value="ECO:0007669"/>
    <property type="project" value="UniProtKB-UniRule"/>
</dbReference>
<dbReference type="GO" id="GO:0003924">
    <property type="term" value="F:GTPase activity"/>
    <property type="evidence" value="ECO:0007669"/>
    <property type="project" value="UniProtKB-UniRule"/>
</dbReference>
<dbReference type="GO" id="GO:0000287">
    <property type="term" value="F:magnesium ion binding"/>
    <property type="evidence" value="ECO:0007669"/>
    <property type="project" value="InterPro"/>
</dbReference>
<dbReference type="GO" id="GO:0042254">
    <property type="term" value="P:ribosome biogenesis"/>
    <property type="evidence" value="ECO:0007669"/>
    <property type="project" value="UniProtKB-UniRule"/>
</dbReference>
<dbReference type="CDD" id="cd01898">
    <property type="entry name" value="Obg"/>
    <property type="match status" value="1"/>
</dbReference>
<dbReference type="FunFam" id="2.70.210.12:FF:000001">
    <property type="entry name" value="GTPase Obg"/>
    <property type="match status" value="1"/>
</dbReference>
<dbReference type="Gene3D" id="2.70.210.12">
    <property type="entry name" value="GTP1/OBG domain"/>
    <property type="match status" value="1"/>
</dbReference>
<dbReference type="Gene3D" id="3.40.50.300">
    <property type="entry name" value="P-loop containing nucleotide triphosphate hydrolases"/>
    <property type="match status" value="1"/>
</dbReference>
<dbReference type="HAMAP" id="MF_01454">
    <property type="entry name" value="GTPase_Obg"/>
    <property type="match status" value="1"/>
</dbReference>
<dbReference type="InterPro" id="IPR031167">
    <property type="entry name" value="G_OBG"/>
</dbReference>
<dbReference type="InterPro" id="IPR006073">
    <property type="entry name" value="GTP-bd"/>
</dbReference>
<dbReference type="InterPro" id="IPR014100">
    <property type="entry name" value="GTP-bd_Obg/CgtA"/>
</dbReference>
<dbReference type="InterPro" id="IPR006074">
    <property type="entry name" value="GTP1-OBG_CS"/>
</dbReference>
<dbReference type="InterPro" id="IPR006169">
    <property type="entry name" value="GTP1_OBG_dom"/>
</dbReference>
<dbReference type="InterPro" id="IPR036726">
    <property type="entry name" value="GTP1_OBG_dom_sf"/>
</dbReference>
<dbReference type="InterPro" id="IPR045086">
    <property type="entry name" value="OBG_GTPase"/>
</dbReference>
<dbReference type="InterPro" id="IPR027417">
    <property type="entry name" value="P-loop_NTPase"/>
</dbReference>
<dbReference type="NCBIfam" id="TIGR02729">
    <property type="entry name" value="Obg_CgtA"/>
    <property type="match status" value="1"/>
</dbReference>
<dbReference type="NCBIfam" id="NF008954">
    <property type="entry name" value="PRK12296.1"/>
    <property type="match status" value="1"/>
</dbReference>
<dbReference type="NCBIfam" id="NF008955">
    <property type="entry name" value="PRK12297.1"/>
    <property type="match status" value="1"/>
</dbReference>
<dbReference type="NCBIfam" id="NF008956">
    <property type="entry name" value="PRK12299.1"/>
    <property type="match status" value="1"/>
</dbReference>
<dbReference type="PANTHER" id="PTHR11702">
    <property type="entry name" value="DEVELOPMENTALLY REGULATED GTP-BINDING PROTEIN-RELATED"/>
    <property type="match status" value="1"/>
</dbReference>
<dbReference type="PANTHER" id="PTHR11702:SF31">
    <property type="entry name" value="MITOCHONDRIAL RIBOSOME-ASSOCIATED GTPASE 2"/>
    <property type="match status" value="1"/>
</dbReference>
<dbReference type="Pfam" id="PF01018">
    <property type="entry name" value="GTP1_OBG"/>
    <property type="match status" value="1"/>
</dbReference>
<dbReference type="Pfam" id="PF01926">
    <property type="entry name" value="MMR_HSR1"/>
    <property type="match status" value="1"/>
</dbReference>
<dbReference type="PIRSF" id="PIRSF002401">
    <property type="entry name" value="GTP_bd_Obg/CgtA"/>
    <property type="match status" value="1"/>
</dbReference>
<dbReference type="PRINTS" id="PR00326">
    <property type="entry name" value="GTP1OBG"/>
</dbReference>
<dbReference type="SUPFAM" id="SSF82051">
    <property type="entry name" value="Obg GTP-binding protein N-terminal domain"/>
    <property type="match status" value="1"/>
</dbReference>
<dbReference type="SUPFAM" id="SSF52540">
    <property type="entry name" value="P-loop containing nucleoside triphosphate hydrolases"/>
    <property type="match status" value="1"/>
</dbReference>
<dbReference type="PROSITE" id="PS51710">
    <property type="entry name" value="G_OBG"/>
    <property type="match status" value="1"/>
</dbReference>
<dbReference type="PROSITE" id="PS00905">
    <property type="entry name" value="GTP1_OBG"/>
    <property type="match status" value="1"/>
</dbReference>
<dbReference type="PROSITE" id="PS51883">
    <property type="entry name" value="OBG"/>
    <property type="match status" value="1"/>
</dbReference>
<organism>
    <name type="scientific">Magnetococcus marinus (strain ATCC BAA-1437 / JCM 17883 / MC-1)</name>
    <dbReference type="NCBI Taxonomy" id="156889"/>
    <lineage>
        <taxon>Bacteria</taxon>
        <taxon>Pseudomonadati</taxon>
        <taxon>Pseudomonadota</taxon>
        <taxon>Alphaproteobacteria</taxon>
        <taxon>Magnetococcales</taxon>
        <taxon>Magnetococcaceae</taxon>
        <taxon>Magnetococcus</taxon>
    </lineage>
</organism>
<feature type="chain" id="PRO_0000386028" description="GTPase Obg">
    <location>
        <begin position="1"/>
        <end position="387"/>
    </location>
</feature>
<feature type="domain" description="Obg" evidence="2">
    <location>
        <begin position="1"/>
        <end position="159"/>
    </location>
</feature>
<feature type="domain" description="OBG-type G" evidence="1">
    <location>
        <begin position="160"/>
        <end position="334"/>
    </location>
</feature>
<feature type="region of interest" description="Disordered" evidence="3">
    <location>
        <begin position="347"/>
        <end position="379"/>
    </location>
</feature>
<feature type="compositionally biased region" description="Acidic residues" evidence="3">
    <location>
        <begin position="368"/>
        <end position="379"/>
    </location>
</feature>
<feature type="binding site" evidence="1">
    <location>
        <begin position="166"/>
        <end position="173"/>
    </location>
    <ligand>
        <name>GTP</name>
        <dbReference type="ChEBI" id="CHEBI:37565"/>
    </ligand>
</feature>
<feature type="binding site" evidence="1">
    <location>
        <position position="173"/>
    </location>
    <ligand>
        <name>Mg(2+)</name>
        <dbReference type="ChEBI" id="CHEBI:18420"/>
    </ligand>
</feature>
<feature type="binding site" evidence="1">
    <location>
        <begin position="191"/>
        <end position="195"/>
    </location>
    <ligand>
        <name>GTP</name>
        <dbReference type="ChEBI" id="CHEBI:37565"/>
    </ligand>
</feature>
<feature type="binding site" evidence="1">
    <location>
        <position position="193"/>
    </location>
    <ligand>
        <name>Mg(2+)</name>
        <dbReference type="ChEBI" id="CHEBI:18420"/>
    </ligand>
</feature>
<feature type="binding site" evidence="1">
    <location>
        <begin position="213"/>
        <end position="216"/>
    </location>
    <ligand>
        <name>GTP</name>
        <dbReference type="ChEBI" id="CHEBI:37565"/>
    </ligand>
</feature>
<feature type="binding site" evidence="1">
    <location>
        <begin position="283"/>
        <end position="286"/>
    </location>
    <ligand>
        <name>GTP</name>
        <dbReference type="ChEBI" id="CHEBI:37565"/>
    </ligand>
</feature>
<feature type="binding site" evidence="1">
    <location>
        <begin position="315"/>
        <end position="317"/>
    </location>
    <ligand>
        <name>GTP</name>
        <dbReference type="ChEBI" id="CHEBI:37565"/>
    </ligand>
</feature>
<protein>
    <recommendedName>
        <fullName evidence="1">GTPase Obg</fullName>
        <ecNumber evidence="1">3.6.5.-</ecNumber>
    </recommendedName>
    <alternativeName>
        <fullName evidence="1">GTP-binding protein Obg</fullName>
    </alternativeName>
</protein>
<sequence>MKFLDEAKIYLKSGDGGGGCISFRREKYIPFGGPDGGDGGRGGDVIFQADGHLNTLIDFRYKQHFKAKRGTHGMGSQCTGASAEALIIKVPVGTIIRDDADGTILVDMVEDGQQFLACKGGDGGRGNMHFKSSTNQAPRRADPGFPGEEMWVRLEMKLLADVGLVGMPNAGKSTLISKVSAAKPKIADYPFTTLQPNLGVVRVEMDHSFVMADIPGLIKGAHEGHGLGMFFLKHIERCAVLLHLVEIDSLEDDDPVSRFQTIEAELAGYSEQLAQKPRILVLSKADLLGEEDRQVVLSWFKERLGEAMPPVFILSSATGEGIEALVYHVGGMVKQWRLKQGKVGHALEDAPTRAGSKALRDEHAPSWQDDDDDDDDDDGVEVIWVRE</sequence>
<comment type="function">
    <text evidence="1">An essential GTPase which binds GTP, GDP and possibly (p)ppGpp with moderate affinity, with high nucleotide exchange rates and a fairly low GTP hydrolysis rate. Plays a role in control of the cell cycle, stress response, ribosome biogenesis and in those bacteria that undergo differentiation, in morphogenesis control.</text>
</comment>
<comment type="cofactor">
    <cofactor evidence="1">
        <name>Mg(2+)</name>
        <dbReference type="ChEBI" id="CHEBI:18420"/>
    </cofactor>
</comment>
<comment type="subunit">
    <text evidence="1">Monomer.</text>
</comment>
<comment type="subcellular location">
    <subcellularLocation>
        <location evidence="1">Cytoplasm</location>
    </subcellularLocation>
</comment>
<comment type="similarity">
    <text evidence="1">Belongs to the TRAFAC class OBG-HflX-like GTPase superfamily. OBG GTPase family.</text>
</comment>